<protein>
    <recommendedName>
        <fullName>Ornithine carbamoyltransferase</fullName>
        <shortName>OTCase</shortName>
        <ecNumber>2.1.3.3</ecNumber>
    </recommendedName>
</protein>
<proteinExistence type="evidence at protein level"/>
<name>OTC_STAAN</name>
<evidence type="ECO:0000250" key="1"/>
<evidence type="ECO:0000255" key="2">
    <source>
        <dbReference type="HAMAP-Rule" id="MF_01109"/>
    </source>
</evidence>
<evidence type="ECO:0000305" key="3"/>
<reference key="1">
    <citation type="journal article" date="2001" name="Lancet">
        <title>Whole genome sequencing of meticillin-resistant Staphylococcus aureus.</title>
        <authorList>
            <person name="Kuroda M."/>
            <person name="Ohta T."/>
            <person name="Uchiyama I."/>
            <person name="Baba T."/>
            <person name="Yuzawa H."/>
            <person name="Kobayashi I."/>
            <person name="Cui L."/>
            <person name="Oguchi A."/>
            <person name="Aoki K."/>
            <person name="Nagai Y."/>
            <person name="Lian J.-Q."/>
            <person name="Ito T."/>
            <person name="Kanamori M."/>
            <person name="Matsumaru H."/>
            <person name="Maruyama A."/>
            <person name="Murakami H."/>
            <person name="Hosoyama A."/>
            <person name="Mizutani-Ui Y."/>
            <person name="Takahashi N.K."/>
            <person name="Sawano T."/>
            <person name="Inoue R."/>
            <person name="Kaito C."/>
            <person name="Sekimizu K."/>
            <person name="Hirakawa H."/>
            <person name="Kuhara S."/>
            <person name="Goto S."/>
            <person name="Yabuzaki J."/>
            <person name="Kanehisa M."/>
            <person name="Yamashita A."/>
            <person name="Oshima K."/>
            <person name="Furuya K."/>
            <person name="Yoshino C."/>
            <person name="Shiba T."/>
            <person name="Hattori M."/>
            <person name="Ogasawara N."/>
            <person name="Hayashi H."/>
            <person name="Hiramatsu K."/>
        </authorList>
    </citation>
    <scope>NUCLEOTIDE SEQUENCE [LARGE SCALE GENOMIC DNA]</scope>
    <source>
        <strain>N315</strain>
    </source>
</reference>
<reference key="2">
    <citation type="journal article" date="2005" name="J. Microbiol. Methods">
        <title>Correlation of proteomic and transcriptomic profiles of Staphylococcus aureus during the post-exponential phase of growth.</title>
        <authorList>
            <person name="Scherl A."/>
            <person name="Francois P."/>
            <person name="Bento M."/>
            <person name="Deshusses J.M."/>
            <person name="Charbonnier Y."/>
            <person name="Converset V."/>
            <person name="Huyghe A."/>
            <person name="Walter N."/>
            <person name="Hoogland C."/>
            <person name="Appel R.D."/>
            <person name="Sanchez J.-C."/>
            <person name="Zimmermann-Ivol C.G."/>
            <person name="Corthals G.L."/>
            <person name="Hochstrasser D.F."/>
            <person name="Schrenzel J."/>
        </authorList>
    </citation>
    <scope>IDENTIFICATION BY MASS SPECTROMETRY</scope>
    <source>
        <strain>N315</strain>
    </source>
</reference>
<reference key="3">
    <citation type="submission" date="2007-10" db="UniProtKB">
        <title>Shotgun proteomic analysis of total and membrane protein extracts of S. aureus strain N315.</title>
        <authorList>
            <person name="Vaezzadeh A.R."/>
            <person name="Deshusses J."/>
            <person name="Lescuyer P."/>
            <person name="Hochstrasser D.F."/>
        </authorList>
    </citation>
    <scope>IDENTIFICATION BY MASS SPECTROMETRY [LARGE SCALE ANALYSIS]</scope>
    <source>
        <strain>N315</strain>
    </source>
</reference>
<organism>
    <name type="scientific">Staphylococcus aureus (strain N315)</name>
    <dbReference type="NCBI Taxonomy" id="158879"/>
    <lineage>
        <taxon>Bacteria</taxon>
        <taxon>Bacillati</taxon>
        <taxon>Bacillota</taxon>
        <taxon>Bacilli</taxon>
        <taxon>Bacillales</taxon>
        <taxon>Staphylococcaceae</taxon>
        <taxon>Staphylococcus</taxon>
    </lineage>
</organism>
<gene>
    <name type="primary">argF</name>
    <name type="ordered locus">SA1012</name>
</gene>
<dbReference type="EC" id="2.1.3.3"/>
<dbReference type="EMBL" id="BA000018">
    <property type="protein sequence ID" value="BAB42264.1"/>
    <property type="molecule type" value="Genomic_DNA"/>
</dbReference>
<dbReference type="PIR" id="D89888">
    <property type="entry name" value="D89888"/>
</dbReference>
<dbReference type="RefSeq" id="WP_000793607.1">
    <property type="nucleotide sequence ID" value="NC_002745.2"/>
</dbReference>
<dbReference type="SMR" id="P99073"/>
<dbReference type="EnsemblBacteria" id="BAB42264">
    <property type="protein sequence ID" value="BAB42264"/>
    <property type="gene ID" value="BAB42264"/>
</dbReference>
<dbReference type="KEGG" id="sau:SA1012"/>
<dbReference type="HOGENOM" id="CLU_043846_3_1_9"/>
<dbReference type="UniPathway" id="UPA00068">
    <property type="reaction ID" value="UER00112"/>
</dbReference>
<dbReference type="GO" id="GO:0005737">
    <property type="term" value="C:cytoplasm"/>
    <property type="evidence" value="ECO:0007669"/>
    <property type="project" value="UniProtKB-SubCell"/>
</dbReference>
<dbReference type="GO" id="GO:0016597">
    <property type="term" value="F:amino acid binding"/>
    <property type="evidence" value="ECO:0007669"/>
    <property type="project" value="InterPro"/>
</dbReference>
<dbReference type="GO" id="GO:0004585">
    <property type="term" value="F:ornithine carbamoyltransferase activity"/>
    <property type="evidence" value="ECO:0007669"/>
    <property type="project" value="UniProtKB-UniRule"/>
</dbReference>
<dbReference type="GO" id="GO:0042450">
    <property type="term" value="P:arginine biosynthetic process via ornithine"/>
    <property type="evidence" value="ECO:0007669"/>
    <property type="project" value="TreeGrafter"/>
</dbReference>
<dbReference type="GO" id="GO:0019240">
    <property type="term" value="P:citrulline biosynthetic process"/>
    <property type="evidence" value="ECO:0007669"/>
    <property type="project" value="TreeGrafter"/>
</dbReference>
<dbReference type="GO" id="GO:0006526">
    <property type="term" value="P:L-arginine biosynthetic process"/>
    <property type="evidence" value="ECO:0007669"/>
    <property type="project" value="UniProtKB-UniRule"/>
</dbReference>
<dbReference type="FunFam" id="3.40.50.1370:FF:000004">
    <property type="entry name" value="Ornithine carbamoyltransferase"/>
    <property type="match status" value="1"/>
</dbReference>
<dbReference type="Gene3D" id="3.40.50.1370">
    <property type="entry name" value="Aspartate/ornithine carbamoyltransferase"/>
    <property type="match status" value="2"/>
</dbReference>
<dbReference type="HAMAP" id="MF_01109">
    <property type="entry name" value="OTCase"/>
    <property type="match status" value="1"/>
</dbReference>
<dbReference type="InterPro" id="IPR006132">
    <property type="entry name" value="Asp/Orn_carbamoyltranf_P-bd"/>
</dbReference>
<dbReference type="InterPro" id="IPR006130">
    <property type="entry name" value="Asp/Orn_carbamoylTrfase"/>
</dbReference>
<dbReference type="InterPro" id="IPR036901">
    <property type="entry name" value="Asp/Orn_carbamoylTrfase_sf"/>
</dbReference>
<dbReference type="InterPro" id="IPR006131">
    <property type="entry name" value="Asp_carbamoyltransf_Asp/Orn-bd"/>
</dbReference>
<dbReference type="InterPro" id="IPR002292">
    <property type="entry name" value="Orn/put_carbamltrans"/>
</dbReference>
<dbReference type="InterPro" id="IPR024904">
    <property type="entry name" value="OTCase_ArgI"/>
</dbReference>
<dbReference type="NCBIfam" id="TIGR00658">
    <property type="entry name" value="orni_carb_tr"/>
    <property type="match status" value="1"/>
</dbReference>
<dbReference type="NCBIfam" id="NF001986">
    <property type="entry name" value="PRK00779.1"/>
    <property type="match status" value="1"/>
</dbReference>
<dbReference type="NCBIfam" id="NF003286">
    <property type="entry name" value="PRK04284.1"/>
    <property type="match status" value="1"/>
</dbReference>
<dbReference type="PANTHER" id="PTHR45753:SF2">
    <property type="entry name" value="ORNITHINE CARBAMOYLTRANSFERASE"/>
    <property type="match status" value="1"/>
</dbReference>
<dbReference type="PANTHER" id="PTHR45753">
    <property type="entry name" value="ORNITHINE CARBAMOYLTRANSFERASE, MITOCHONDRIAL"/>
    <property type="match status" value="1"/>
</dbReference>
<dbReference type="Pfam" id="PF00185">
    <property type="entry name" value="OTCace"/>
    <property type="match status" value="1"/>
</dbReference>
<dbReference type="Pfam" id="PF02729">
    <property type="entry name" value="OTCace_N"/>
    <property type="match status" value="1"/>
</dbReference>
<dbReference type="PRINTS" id="PR00100">
    <property type="entry name" value="AOTCASE"/>
</dbReference>
<dbReference type="PRINTS" id="PR00102">
    <property type="entry name" value="OTCASE"/>
</dbReference>
<dbReference type="SUPFAM" id="SSF53671">
    <property type="entry name" value="Aspartate/ornithine carbamoyltransferase"/>
    <property type="match status" value="1"/>
</dbReference>
<dbReference type="PROSITE" id="PS00097">
    <property type="entry name" value="CARBAMOYLTRANSFERASE"/>
    <property type="match status" value="1"/>
</dbReference>
<sequence>MKNLRNRSFLTLLDFSRQEVEFLLTLSEDLKRAKYIGTEKPMLKNKNIALLFEKDSTRTRCAFEVAAHDQGANVTYLGPTGSQMGKKETTKDTARVLGGMYDGIEYRGFSQRTVETLAEYSGVPVWNGLTDEDHPTQVLADFLTAKEVLKKDYADINFTYVGDGRNNVANALMQGAAIMGMNFHLVCPKELNPTDELLNRCKNIAAENGGNILITDDIDQGVKGSDVIYTDVWVSMGEPDEVWKERLELLKPYQVNKEMMDKTGNPNVIFEHCLPSFHNADTKIGQQIFEKYGIREMEVTDEVFESKASVVFQEAENRMHTIKAVMVATLGEF</sequence>
<comment type="function">
    <text evidence="1">Reversibly catalyzes the transfer of the carbamoyl group from carbamoyl phosphate (CP) to the N(epsilon) atom of ornithine (ORN) to produce L-citrulline.</text>
</comment>
<comment type="catalytic activity">
    <reaction>
        <text>carbamoyl phosphate + L-ornithine = L-citrulline + phosphate + H(+)</text>
        <dbReference type="Rhea" id="RHEA:19513"/>
        <dbReference type="ChEBI" id="CHEBI:15378"/>
        <dbReference type="ChEBI" id="CHEBI:43474"/>
        <dbReference type="ChEBI" id="CHEBI:46911"/>
        <dbReference type="ChEBI" id="CHEBI:57743"/>
        <dbReference type="ChEBI" id="CHEBI:58228"/>
        <dbReference type="EC" id="2.1.3.3"/>
    </reaction>
</comment>
<comment type="pathway">
    <text>Amino-acid biosynthesis; L-arginine biosynthesis; L-arginine from L-ornithine and carbamoyl phosphate: step 1/3.</text>
</comment>
<comment type="subcellular location">
    <subcellularLocation>
        <location evidence="3">Cytoplasm</location>
    </subcellularLocation>
</comment>
<comment type="similarity">
    <text evidence="3">Belongs to the aspartate/ornithine carbamoyltransferase superfamily. OTCase family.</text>
</comment>
<feature type="chain" id="PRO_0000113012" description="Ornithine carbamoyltransferase">
    <location>
        <begin position="1"/>
        <end position="333"/>
    </location>
</feature>
<feature type="binding site" evidence="2">
    <location>
        <begin position="56"/>
        <end position="59"/>
    </location>
    <ligand>
        <name>carbamoyl phosphate</name>
        <dbReference type="ChEBI" id="CHEBI:58228"/>
    </ligand>
</feature>
<feature type="binding site" evidence="2">
    <location>
        <position position="83"/>
    </location>
    <ligand>
        <name>carbamoyl phosphate</name>
        <dbReference type="ChEBI" id="CHEBI:58228"/>
    </ligand>
</feature>
<feature type="binding site" evidence="2">
    <location>
        <position position="107"/>
    </location>
    <ligand>
        <name>carbamoyl phosphate</name>
        <dbReference type="ChEBI" id="CHEBI:58228"/>
    </ligand>
</feature>
<feature type="binding site" evidence="2">
    <location>
        <begin position="134"/>
        <end position="137"/>
    </location>
    <ligand>
        <name>carbamoyl phosphate</name>
        <dbReference type="ChEBI" id="CHEBI:58228"/>
    </ligand>
</feature>
<feature type="binding site" evidence="2">
    <location>
        <position position="167"/>
    </location>
    <ligand>
        <name>L-ornithine</name>
        <dbReference type="ChEBI" id="CHEBI:46911"/>
    </ligand>
</feature>
<feature type="binding site" evidence="2">
    <location>
        <position position="231"/>
    </location>
    <ligand>
        <name>L-ornithine</name>
        <dbReference type="ChEBI" id="CHEBI:46911"/>
    </ligand>
</feature>
<feature type="binding site" evidence="2">
    <location>
        <begin position="235"/>
        <end position="236"/>
    </location>
    <ligand>
        <name>L-ornithine</name>
        <dbReference type="ChEBI" id="CHEBI:46911"/>
    </ligand>
</feature>
<feature type="binding site" evidence="2">
    <location>
        <begin position="273"/>
        <end position="274"/>
    </location>
    <ligand>
        <name>carbamoyl phosphate</name>
        <dbReference type="ChEBI" id="CHEBI:58228"/>
    </ligand>
</feature>
<feature type="binding site" evidence="2">
    <location>
        <position position="318"/>
    </location>
    <ligand>
        <name>carbamoyl phosphate</name>
        <dbReference type="ChEBI" id="CHEBI:58228"/>
    </ligand>
</feature>
<keyword id="KW-0028">Amino-acid biosynthesis</keyword>
<keyword id="KW-0055">Arginine biosynthesis</keyword>
<keyword id="KW-0963">Cytoplasm</keyword>
<keyword id="KW-0808">Transferase</keyword>
<accession>P99073</accession>
<accession>Q9K3A1</accession>